<reference key="1">
    <citation type="journal article" date="2008" name="BMC Genomics">
        <title>Comparative genomic analysis of the gut bacterium Bifidobacterium longum reveals loci susceptible to deletion during pure culture growth.</title>
        <authorList>
            <person name="Lee J.H."/>
            <person name="Karamychev V.N."/>
            <person name="Kozyavkin S.A."/>
            <person name="Mills D."/>
            <person name="Pavlov A.R."/>
            <person name="Pavlova N.V."/>
            <person name="Polouchine N.N."/>
            <person name="Richardson P.M."/>
            <person name="Shakhova V.V."/>
            <person name="Slesarev A.I."/>
            <person name="Weimer B."/>
            <person name="O'Sullivan D.J."/>
        </authorList>
    </citation>
    <scope>NUCLEOTIDE SEQUENCE [LARGE SCALE GENOMIC DNA]</scope>
    <source>
        <strain>DJO10A</strain>
    </source>
</reference>
<accession>B3DRV5</accession>
<sequence>MLGDSRDLFRPKTSDIPAKPGVYKWRDGEGRVIYVGKAKNLRNRLTNYFQPLYLLHPRTQTMVLTARSLEWTVVATELESLTLEYTWIKEFDPRFNVQFRDDKTYPYLAVSTGERIPRVWVTRSRKRRDTRYFGPYAKVWELRHSLDRLLRTFPVRTCTTNVFHKAQLTGRPCLFASIGKCSAPCVNRIEADEHRRLCEQLVGVMTGRLGRPYIAQLTRDMKEASAELEFEKAARLRDQIQMLETVVQQNAVVFDQDVDADVFGFASDELEASVHAFYVRAGSIRGERNWSVERVEDIDDADLMADLLVQVYSDAAGDNHPQSAATISTNREAIGSTQTITATDAVARAQATRERNTRQETTGRADLLAPIAPVPREIIVPVEPARREELEGWLTNLRGGAVTIRVASRGDKKQLMDRANENASQALQRSKMSRISDMGARTQAMNDVAKALGLAEAPLRIECYDISNTVGGAFQVASMVVFEDAIAKKSEYRRFAIRGKDGKGAVDDLSALYETLTRRFKHGNIAGDSGESIDAEQRVASAAGKMTTAVAAETIAANGNDNGEGGSDISGKGHAVPVGVQNDARESPPDIVQQNTNRHHFAYKPNLVVVDGGKPQVMAAAKALEDCGVNDVAVCGLAKRLEEVWVPDDDYPIILKRQSEGMYLLQRVRDESHRFAITYHRQQRRKGALRSALDEIPGIGESYQKRLLNHFGSVKAMREASVEDFEKVKGIGHAKAEALYTALHEQ</sequence>
<comment type="function">
    <text evidence="1">The UvrABC repair system catalyzes the recognition and processing of DNA lesions. UvrC both incises the 5' and 3' sides of the lesion. The N-terminal half is responsible for the 3' incision and the C-terminal half is responsible for the 5' incision.</text>
</comment>
<comment type="subunit">
    <text evidence="1">Interacts with UvrB in an incision complex.</text>
</comment>
<comment type="subcellular location">
    <subcellularLocation>
        <location evidence="1">Cytoplasm</location>
    </subcellularLocation>
</comment>
<comment type="similarity">
    <text evidence="1">Belongs to the UvrC family.</text>
</comment>
<protein>
    <recommendedName>
        <fullName evidence="1">UvrABC system protein C</fullName>
        <shortName evidence="1">Protein UvrC</shortName>
    </recommendedName>
    <alternativeName>
        <fullName evidence="1">Excinuclease ABC subunit C</fullName>
    </alternativeName>
</protein>
<proteinExistence type="inferred from homology"/>
<keyword id="KW-0963">Cytoplasm</keyword>
<keyword id="KW-0227">DNA damage</keyword>
<keyword id="KW-0228">DNA excision</keyword>
<keyword id="KW-0234">DNA repair</keyword>
<keyword id="KW-0267">Excision nuclease</keyword>
<keyword id="KW-0742">SOS response</keyword>
<gene>
    <name evidence="1" type="primary">uvrC</name>
    <name type="ordered locus">BLD_0428</name>
</gene>
<organism>
    <name type="scientific">Bifidobacterium longum (strain DJO10A)</name>
    <dbReference type="NCBI Taxonomy" id="205913"/>
    <lineage>
        <taxon>Bacteria</taxon>
        <taxon>Bacillati</taxon>
        <taxon>Actinomycetota</taxon>
        <taxon>Actinomycetes</taxon>
        <taxon>Bifidobacteriales</taxon>
        <taxon>Bifidobacteriaceae</taxon>
        <taxon>Bifidobacterium</taxon>
    </lineage>
</organism>
<dbReference type="EMBL" id="CP000605">
    <property type="protein sequence ID" value="ACD97874.1"/>
    <property type="molecule type" value="Genomic_DNA"/>
</dbReference>
<dbReference type="SMR" id="B3DRV5"/>
<dbReference type="KEGG" id="blj:BLD_0428"/>
<dbReference type="HOGENOM" id="CLU_014841_3_2_11"/>
<dbReference type="Proteomes" id="UP000002419">
    <property type="component" value="Chromosome"/>
</dbReference>
<dbReference type="GO" id="GO:0005737">
    <property type="term" value="C:cytoplasm"/>
    <property type="evidence" value="ECO:0007669"/>
    <property type="project" value="UniProtKB-SubCell"/>
</dbReference>
<dbReference type="GO" id="GO:0009380">
    <property type="term" value="C:excinuclease repair complex"/>
    <property type="evidence" value="ECO:0007669"/>
    <property type="project" value="InterPro"/>
</dbReference>
<dbReference type="GO" id="GO:0003677">
    <property type="term" value="F:DNA binding"/>
    <property type="evidence" value="ECO:0007669"/>
    <property type="project" value="UniProtKB-UniRule"/>
</dbReference>
<dbReference type="GO" id="GO:0009381">
    <property type="term" value="F:excinuclease ABC activity"/>
    <property type="evidence" value="ECO:0007669"/>
    <property type="project" value="UniProtKB-UniRule"/>
</dbReference>
<dbReference type="GO" id="GO:0006289">
    <property type="term" value="P:nucleotide-excision repair"/>
    <property type="evidence" value="ECO:0007669"/>
    <property type="project" value="UniProtKB-UniRule"/>
</dbReference>
<dbReference type="GO" id="GO:0009432">
    <property type="term" value="P:SOS response"/>
    <property type="evidence" value="ECO:0007669"/>
    <property type="project" value="UniProtKB-UniRule"/>
</dbReference>
<dbReference type="CDD" id="cd10434">
    <property type="entry name" value="GIY-YIG_UvrC_Cho"/>
    <property type="match status" value="1"/>
</dbReference>
<dbReference type="FunFam" id="3.40.1440.10:FF:000001">
    <property type="entry name" value="UvrABC system protein C"/>
    <property type="match status" value="1"/>
</dbReference>
<dbReference type="Gene3D" id="1.10.150.20">
    <property type="entry name" value="5' to 3' exonuclease, C-terminal subdomain"/>
    <property type="match status" value="1"/>
</dbReference>
<dbReference type="Gene3D" id="3.40.1440.10">
    <property type="entry name" value="GIY-YIG endonuclease"/>
    <property type="match status" value="1"/>
</dbReference>
<dbReference type="Gene3D" id="4.10.860.10">
    <property type="entry name" value="UVR domain"/>
    <property type="match status" value="1"/>
</dbReference>
<dbReference type="Gene3D" id="3.30.420.340">
    <property type="entry name" value="UvrC, RNAse H endonuclease domain"/>
    <property type="match status" value="1"/>
</dbReference>
<dbReference type="HAMAP" id="MF_00203">
    <property type="entry name" value="UvrC"/>
    <property type="match status" value="1"/>
</dbReference>
<dbReference type="InterPro" id="IPR000305">
    <property type="entry name" value="GIY-YIG_endonuc"/>
</dbReference>
<dbReference type="InterPro" id="IPR035901">
    <property type="entry name" value="GIY-YIG_endonuc_sf"/>
</dbReference>
<dbReference type="InterPro" id="IPR047296">
    <property type="entry name" value="GIY-YIG_UvrC_Cho"/>
</dbReference>
<dbReference type="InterPro" id="IPR003583">
    <property type="entry name" value="Hlx-hairpin-Hlx_DNA-bd_motif"/>
</dbReference>
<dbReference type="InterPro" id="IPR010994">
    <property type="entry name" value="RuvA_2-like"/>
</dbReference>
<dbReference type="InterPro" id="IPR001943">
    <property type="entry name" value="UVR_dom"/>
</dbReference>
<dbReference type="InterPro" id="IPR036876">
    <property type="entry name" value="UVR_dom_sf"/>
</dbReference>
<dbReference type="InterPro" id="IPR050066">
    <property type="entry name" value="UvrABC_protein_C"/>
</dbReference>
<dbReference type="InterPro" id="IPR004791">
    <property type="entry name" value="UvrC"/>
</dbReference>
<dbReference type="InterPro" id="IPR001162">
    <property type="entry name" value="UvrC_RNase_H_dom"/>
</dbReference>
<dbReference type="InterPro" id="IPR038476">
    <property type="entry name" value="UvrC_RNase_H_dom_sf"/>
</dbReference>
<dbReference type="NCBIfam" id="NF001824">
    <property type="entry name" value="PRK00558.1-5"/>
    <property type="match status" value="1"/>
</dbReference>
<dbReference type="PANTHER" id="PTHR30562:SF1">
    <property type="entry name" value="UVRABC SYSTEM PROTEIN C"/>
    <property type="match status" value="1"/>
</dbReference>
<dbReference type="PANTHER" id="PTHR30562">
    <property type="entry name" value="UVRC/OXIDOREDUCTASE"/>
    <property type="match status" value="1"/>
</dbReference>
<dbReference type="Pfam" id="PF01541">
    <property type="entry name" value="GIY-YIG"/>
    <property type="match status" value="1"/>
</dbReference>
<dbReference type="Pfam" id="PF14520">
    <property type="entry name" value="HHH_5"/>
    <property type="match status" value="1"/>
</dbReference>
<dbReference type="Pfam" id="PF02151">
    <property type="entry name" value="UVR"/>
    <property type="match status" value="1"/>
</dbReference>
<dbReference type="Pfam" id="PF22920">
    <property type="entry name" value="UvrC_RNaseH"/>
    <property type="match status" value="2"/>
</dbReference>
<dbReference type="Pfam" id="PF08459">
    <property type="entry name" value="UvrC_RNaseH_dom"/>
    <property type="match status" value="1"/>
</dbReference>
<dbReference type="SMART" id="SM00465">
    <property type="entry name" value="GIYc"/>
    <property type="match status" value="1"/>
</dbReference>
<dbReference type="SMART" id="SM00278">
    <property type="entry name" value="HhH1"/>
    <property type="match status" value="2"/>
</dbReference>
<dbReference type="SUPFAM" id="SSF46600">
    <property type="entry name" value="C-terminal UvrC-binding domain of UvrB"/>
    <property type="match status" value="1"/>
</dbReference>
<dbReference type="SUPFAM" id="SSF82771">
    <property type="entry name" value="GIY-YIG endonuclease"/>
    <property type="match status" value="1"/>
</dbReference>
<dbReference type="SUPFAM" id="SSF47781">
    <property type="entry name" value="RuvA domain 2-like"/>
    <property type="match status" value="1"/>
</dbReference>
<dbReference type="PROSITE" id="PS50164">
    <property type="entry name" value="GIY_YIG"/>
    <property type="match status" value="1"/>
</dbReference>
<dbReference type="PROSITE" id="PS50151">
    <property type="entry name" value="UVR"/>
    <property type="match status" value="1"/>
</dbReference>
<dbReference type="PROSITE" id="PS50165">
    <property type="entry name" value="UVRC"/>
    <property type="match status" value="1"/>
</dbReference>
<evidence type="ECO:0000255" key="1">
    <source>
        <dbReference type="HAMAP-Rule" id="MF_00203"/>
    </source>
</evidence>
<evidence type="ECO:0000256" key="2">
    <source>
        <dbReference type="SAM" id="MobiDB-lite"/>
    </source>
</evidence>
<feature type="chain" id="PRO_1000099459" description="UvrABC system protein C">
    <location>
        <begin position="1"/>
        <end position="746"/>
    </location>
</feature>
<feature type="domain" description="GIY-YIG" evidence="1">
    <location>
        <begin position="18"/>
        <end position="97"/>
    </location>
</feature>
<feature type="domain" description="UVR" evidence="1">
    <location>
        <begin position="211"/>
        <end position="246"/>
    </location>
</feature>
<feature type="region of interest" description="Disordered" evidence="2">
    <location>
        <begin position="557"/>
        <end position="577"/>
    </location>
</feature>
<name>UVRC_BIFLD</name>